<dbReference type="EMBL" id="U18997">
    <property type="protein sequence ID" value="AAA57900.1"/>
    <property type="molecule type" value="Genomic_DNA"/>
</dbReference>
<dbReference type="EMBL" id="U00096">
    <property type="protein sequence ID" value="AAC76131.1"/>
    <property type="molecule type" value="Genomic_DNA"/>
</dbReference>
<dbReference type="EMBL" id="AP009048">
    <property type="protein sequence ID" value="BAE77146.1"/>
    <property type="molecule type" value="Genomic_DNA"/>
</dbReference>
<dbReference type="PIR" id="E65098">
    <property type="entry name" value="E65098"/>
</dbReference>
<dbReference type="RefSeq" id="NP_417567.1">
    <property type="nucleotide sequence ID" value="NC_000913.3"/>
</dbReference>
<dbReference type="RefSeq" id="WP_001166760.1">
    <property type="nucleotide sequence ID" value="NZ_SSZK01000007.1"/>
</dbReference>
<dbReference type="SMR" id="P42615"/>
<dbReference type="BioGRID" id="4259422">
    <property type="interactions" value="9"/>
</dbReference>
<dbReference type="FunCoup" id="P42615">
    <property type="interactions" value="204"/>
</dbReference>
<dbReference type="IntAct" id="P42615">
    <property type="interactions" value="1"/>
</dbReference>
<dbReference type="STRING" id="511145.b3096"/>
<dbReference type="PaxDb" id="511145-b3096"/>
<dbReference type="EnsemblBacteria" id="AAC76131">
    <property type="protein sequence ID" value="AAC76131"/>
    <property type="gene ID" value="b3096"/>
</dbReference>
<dbReference type="GeneID" id="947619"/>
<dbReference type="KEGG" id="ecj:JW3067"/>
<dbReference type="KEGG" id="eco:b3096"/>
<dbReference type="KEGG" id="ecoc:C3026_16905"/>
<dbReference type="PATRIC" id="fig|1411691.4.peg.3632"/>
<dbReference type="EchoBASE" id="EB2597"/>
<dbReference type="eggNOG" id="ENOG50333DY">
    <property type="taxonomic scope" value="Bacteria"/>
</dbReference>
<dbReference type="HOGENOM" id="CLU_153761_0_0_6"/>
<dbReference type="InParanoid" id="P42615"/>
<dbReference type="OMA" id="WHHLDAN"/>
<dbReference type="OrthoDB" id="6414235at2"/>
<dbReference type="PhylomeDB" id="P42615"/>
<dbReference type="BioCyc" id="EcoCyc:G7610-MONOMER"/>
<dbReference type="PRO" id="PR:P42615"/>
<dbReference type="Proteomes" id="UP000000625">
    <property type="component" value="Chromosome"/>
</dbReference>
<dbReference type="GO" id="GO:0016020">
    <property type="term" value="C:membrane"/>
    <property type="evidence" value="ECO:0000270"/>
    <property type="project" value="EcoCyc"/>
</dbReference>
<dbReference type="GO" id="GO:0005886">
    <property type="term" value="C:plasma membrane"/>
    <property type="evidence" value="ECO:0007669"/>
    <property type="project" value="UniProtKB-SubCell"/>
</dbReference>
<dbReference type="GO" id="GO:0019901">
    <property type="term" value="F:protein kinase binding"/>
    <property type="evidence" value="ECO:0000269"/>
    <property type="project" value="EcoCyc"/>
</dbReference>
<dbReference type="Gene3D" id="3.30.70.260">
    <property type="match status" value="1"/>
</dbReference>
<dbReference type="HAMAP" id="MF_00904">
    <property type="entry name" value="Modulator_MzrA"/>
    <property type="match status" value="1"/>
</dbReference>
<dbReference type="InterPro" id="IPR026574">
    <property type="entry name" value="Modulator_MzrA"/>
</dbReference>
<dbReference type="InterPro" id="IPR027398">
    <property type="entry name" value="SecD-TM"/>
</dbReference>
<dbReference type="NCBIfam" id="NF007915">
    <property type="entry name" value="PRK10629.1"/>
    <property type="match status" value="1"/>
</dbReference>
<dbReference type="Pfam" id="PF13721">
    <property type="entry name" value="SecD-TM1"/>
    <property type="match status" value="1"/>
</dbReference>
<accession>P42615</accession>
<accession>Q2M9B0</accession>
<protein>
    <recommendedName>
        <fullName evidence="1">Modulator protein MzrA</fullName>
    </recommendedName>
</protein>
<keyword id="KW-0997">Cell inner membrane</keyword>
<keyword id="KW-1003">Cell membrane</keyword>
<keyword id="KW-0472">Membrane</keyword>
<keyword id="KW-1185">Reference proteome</keyword>
<keyword id="KW-0812">Transmembrane</keyword>
<keyword id="KW-1133">Transmembrane helix</keyword>
<sequence length="127" mass="14172">MQIPRMSLRQLAWSGAVLLLVGTLLLAWSAVRQQESTLAIRAVHQGTTMPDGFSIWHHLDAHGIPFKSITPKNDTLLITFDSSDQSAAAKAVLDRTLPHGYIIAQQDNNSQAMQWLTRLRDNSHRFG</sequence>
<proteinExistence type="evidence at protein level"/>
<feature type="chain" id="PRO_0000169427" description="Modulator protein MzrA">
    <location>
        <begin position="1"/>
        <end position="127"/>
    </location>
</feature>
<feature type="topological domain" description="Cytoplasmic" evidence="1">
    <location>
        <begin position="1"/>
        <end position="10"/>
    </location>
</feature>
<feature type="transmembrane region" description="Helical" evidence="1">
    <location>
        <begin position="11"/>
        <end position="31"/>
    </location>
</feature>
<feature type="topological domain" description="Periplasmic" evidence="1">
    <location>
        <begin position="32"/>
        <end position="127"/>
    </location>
</feature>
<feature type="mutagenesis site" description="Loss of activity. Decreases interaction with EnvZ." evidence="4">
    <original>D</original>
    <variation>A</variation>
    <location>
        <position position="51"/>
    </location>
</feature>
<feature type="mutagenesis site" description="No change in activity." evidence="4">
    <original>K</original>
    <variation>A</variation>
    <location>
        <position position="67"/>
    </location>
</feature>
<feature type="mutagenesis site" description="No change in activity." evidence="4">
    <original>D</original>
    <variation>A</variation>
    <location>
        <position position="74"/>
    </location>
</feature>
<feature type="mutagenesis site" description="Loss of activity. Decreases interaction with EnvZ." evidence="4">
    <original>I</original>
    <variation>F</variation>
    <location>
        <position position="78"/>
    </location>
</feature>
<comment type="function">
    <text evidence="1 3 4">Modulates the activity of the EnvZ/OmpR two-component regulatory system, probably by directly modulating EnvZ enzymatic activity and increasing stability of phosphorylated OmpR. Links the two-component systems CpxA/CpxR and EnvZ/OmpR.</text>
</comment>
<comment type="subunit">
    <text evidence="1 3 4 5">Interacts with EnvZ.</text>
</comment>
<comment type="interaction">
    <interactant intactId="EBI-6412632">
        <id>P42615</id>
    </interactant>
    <interactant intactId="EBI-1121750">
        <id>P0AEJ4</id>
        <label>envZ</label>
    </interactant>
    <organismsDiffer>false</organismsDiffer>
    <experiments>3</experiments>
</comment>
<comment type="subcellular location">
    <subcellularLocation>
        <location evidence="1 3 4">Cell inner membrane</location>
        <topology evidence="1 3 4">Single-pass membrane protein</topology>
    </subcellularLocation>
</comment>
<comment type="induction">
    <text evidence="2 3">Regulated by the CpxA/CpxR two-component system. Negatively regulated by EnvZ/OmpR.</text>
</comment>
<comment type="domain">
    <text evidence="4">Interacts with EnvZ through its soluble periplasmic region.</text>
</comment>
<comment type="similarity">
    <text evidence="1">Belongs to the MzrA family.</text>
</comment>
<reference key="1">
    <citation type="journal article" date="1997" name="Science">
        <title>The complete genome sequence of Escherichia coli K-12.</title>
        <authorList>
            <person name="Blattner F.R."/>
            <person name="Plunkett G. III"/>
            <person name="Bloch C.A."/>
            <person name="Perna N.T."/>
            <person name="Burland V."/>
            <person name="Riley M."/>
            <person name="Collado-Vides J."/>
            <person name="Glasner J.D."/>
            <person name="Rode C.K."/>
            <person name="Mayhew G.F."/>
            <person name="Gregor J."/>
            <person name="Davis N.W."/>
            <person name="Kirkpatrick H.A."/>
            <person name="Goeden M.A."/>
            <person name="Rose D.J."/>
            <person name="Mau B."/>
            <person name="Shao Y."/>
        </authorList>
    </citation>
    <scope>NUCLEOTIDE SEQUENCE [LARGE SCALE GENOMIC DNA]</scope>
    <source>
        <strain>K12 / MG1655 / ATCC 47076</strain>
    </source>
</reference>
<reference key="2">
    <citation type="journal article" date="2006" name="Mol. Syst. Biol.">
        <title>Highly accurate genome sequences of Escherichia coli K-12 strains MG1655 and W3110.</title>
        <authorList>
            <person name="Hayashi K."/>
            <person name="Morooka N."/>
            <person name="Yamamoto Y."/>
            <person name="Fujita K."/>
            <person name="Isono K."/>
            <person name="Choi S."/>
            <person name="Ohtsubo E."/>
            <person name="Baba T."/>
            <person name="Wanner B.L."/>
            <person name="Mori H."/>
            <person name="Horiuchi T."/>
        </authorList>
    </citation>
    <scope>NUCLEOTIDE SEQUENCE [LARGE SCALE GENOMIC DNA]</scope>
    <source>
        <strain>K12 / W3110 / ATCC 27325 / DSM 5911</strain>
    </source>
</reference>
<reference key="3">
    <citation type="journal article" date="2006" name="Biosci. Biotechnol. Biochem.">
        <title>Characterization of copper-inducible promoters regulated by CpxA/CpxR in Escherichia coli.</title>
        <authorList>
            <person name="Yamamoto K."/>
            <person name="Ishihama A."/>
        </authorList>
    </citation>
    <scope>INDUCTION</scope>
    <source>
        <strain>K12</strain>
    </source>
</reference>
<reference key="4">
    <citation type="journal article" date="2009" name="Mol. Microbiol.">
        <title>MzrA: a novel modulator of the EnvZ/OmpR two-component regulon.</title>
        <authorList>
            <person name="Gerken H."/>
            <person name="Charlson E.S."/>
            <person name="Cicirelli E.M."/>
            <person name="Kenney L.J."/>
            <person name="Misra R."/>
        </authorList>
    </citation>
    <scope>FUNCTION</scope>
    <scope>INTERACTION WITH ENVZ</scope>
    <scope>SUBCELLULAR LOCATION</scope>
    <scope>TOPOLOGY</scope>
    <scope>INDUCTION</scope>
    <scope>GENE NAME</scope>
    <source>
        <strain>K12 / MC4100 / ATCC 35695 / DSM 6574</strain>
    </source>
</reference>
<reference key="5">
    <citation type="journal article" date="2010" name="J. Bacteriol.">
        <title>MzrA-EnvZ interactions in the periplasm influence the EnvZ/OmpR two-component regulon.</title>
        <authorList>
            <person name="Gerken H."/>
            <person name="Misra R."/>
        </authorList>
    </citation>
    <scope>FUNCTION</scope>
    <scope>INTERACTION WITH ENVZ</scope>
    <scope>SUBCELLULAR LOCATION</scope>
    <scope>DOMAIN</scope>
    <scope>MUTAGENESIS OF ASP-51; LYS-67; ASP-74 AND ILE-78</scope>
    <source>
        <strain>K12 / MC4100 / ATCC 35695 / DSM 6574</strain>
    </source>
</reference>
<reference key="6">
    <citation type="journal article" date="2018" name="PLoS ONE">
        <title>The role of polyproline motifs in the histidine kinase EnvZ.</title>
        <authorList>
            <person name="Motz M."/>
            <person name="Jung K."/>
        </authorList>
    </citation>
    <scope>INTERACTION WITH ENVZ</scope>
    <scope>SUBUNIT</scope>
</reference>
<evidence type="ECO:0000255" key="1">
    <source>
        <dbReference type="HAMAP-Rule" id="MF_00904"/>
    </source>
</evidence>
<evidence type="ECO:0000269" key="2">
    <source>
    </source>
</evidence>
<evidence type="ECO:0000269" key="3">
    <source>
    </source>
</evidence>
<evidence type="ECO:0000269" key="4">
    <source>
    </source>
</evidence>
<evidence type="ECO:0000269" key="5">
    <source>
    </source>
</evidence>
<organism>
    <name type="scientific">Escherichia coli (strain K12)</name>
    <dbReference type="NCBI Taxonomy" id="83333"/>
    <lineage>
        <taxon>Bacteria</taxon>
        <taxon>Pseudomonadati</taxon>
        <taxon>Pseudomonadota</taxon>
        <taxon>Gammaproteobacteria</taxon>
        <taxon>Enterobacterales</taxon>
        <taxon>Enterobacteriaceae</taxon>
        <taxon>Escherichia</taxon>
    </lineage>
</organism>
<gene>
    <name evidence="1" type="primary">mzrA</name>
    <name type="synonym">ecfM</name>
    <name type="synonym">yqjB</name>
    <name type="ordered locus">b3096</name>
    <name type="ordered locus">JW3067</name>
</gene>
<name>MZRA_ECOLI</name>